<accession>B7M9T5</accession>
<keyword id="KW-0997">Cell inner membrane</keyword>
<keyword id="KW-1003">Cell membrane</keyword>
<keyword id="KW-0472">Membrane</keyword>
<keyword id="KW-1185">Reference proteome</keyword>
<keyword id="KW-0812">Transmembrane</keyword>
<keyword id="KW-1133">Transmembrane helix</keyword>
<dbReference type="EMBL" id="CU928161">
    <property type="protein sequence ID" value="CAR02942.1"/>
    <property type="molecule type" value="Genomic_DNA"/>
</dbReference>
<dbReference type="RefSeq" id="WP_001304355.1">
    <property type="nucleotide sequence ID" value="NC_011742.1"/>
</dbReference>
<dbReference type="SMR" id="B7M9T5"/>
<dbReference type="KEGG" id="ecz:ECS88_1627"/>
<dbReference type="HOGENOM" id="CLU_117653_2_1_6"/>
<dbReference type="Proteomes" id="UP000000747">
    <property type="component" value="Chromosome"/>
</dbReference>
<dbReference type="GO" id="GO:0005886">
    <property type="term" value="C:plasma membrane"/>
    <property type="evidence" value="ECO:0007669"/>
    <property type="project" value="UniProtKB-SubCell"/>
</dbReference>
<dbReference type="HAMAP" id="MF_00010">
    <property type="entry name" value="UPF0060"/>
    <property type="match status" value="1"/>
</dbReference>
<dbReference type="InterPro" id="IPR003844">
    <property type="entry name" value="UPF0060"/>
</dbReference>
<dbReference type="NCBIfam" id="NF002586">
    <property type="entry name" value="PRK02237.1"/>
    <property type="match status" value="1"/>
</dbReference>
<dbReference type="PANTHER" id="PTHR36116">
    <property type="entry name" value="UPF0060 MEMBRANE PROTEIN YNFA"/>
    <property type="match status" value="1"/>
</dbReference>
<dbReference type="PANTHER" id="PTHR36116:SF1">
    <property type="entry name" value="UPF0060 MEMBRANE PROTEIN YNFA"/>
    <property type="match status" value="1"/>
</dbReference>
<dbReference type="Pfam" id="PF02694">
    <property type="entry name" value="UPF0060"/>
    <property type="match status" value="1"/>
</dbReference>
<dbReference type="SUPFAM" id="SSF103481">
    <property type="entry name" value="Multidrug resistance efflux transporter EmrE"/>
    <property type="match status" value="1"/>
</dbReference>
<name>YNFA_ECO45</name>
<feature type="chain" id="PRO_1000197490" description="UPF0060 membrane protein YnfA">
    <location>
        <begin position="1"/>
        <end position="108"/>
    </location>
</feature>
<feature type="topological domain" description="Periplasmic" evidence="1">
    <location>
        <begin position="1"/>
        <end position="5"/>
    </location>
</feature>
<feature type="transmembrane region" description="Helical" evidence="1">
    <location>
        <begin position="6"/>
        <end position="26"/>
    </location>
</feature>
<feature type="topological domain" description="Cytoplasmic" evidence="1">
    <location>
        <begin position="27"/>
        <end position="30"/>
    </location>
</feature>
<feature type="transmembrane region" description="Helical" evidence="1">
    <location>
        <begin position="31"/>
        <end position="51"/>
    </location>
</feature>
<feature type="topological domain" description="Periplasmic" evidence="1">
    <location>
        <begin position="52"/>
        <end position="60"/>
    </location>
</feature>
<feature type="transmembrane region" description="Helical" evidence="1">
    <location>
        <begin position="61"/>
        <end position="81"/>
    </location>
</feature>
<feature type="topological domain" description="Cytoplasmic" evidence="1">
    <location>
        <begin position="82"/>
        <end position="84"/>
    </location>
</feature>
<feature type="transmembrane region" description="Helical" evidence="1">
    <location>
        <begin position="85"/>
        <end position="105"/>
    </location>
</feature>
<feature type="topological domain" description="Periplasmic" evidence="1">
    <location>
        <begin position="106"/>
        <end position="108"/>
    </location>
</feature>
<comment type="subcellular location">
    <subcellularLocation>
        <location evidence="1">Cell inner membrane</location>
        <topology evidence="1">Multi-pass membrane protein</topology>
    </subcellularLocation>
</comment>
<comment type="similarity">
    <text evidence="1">Belongs to the UPF0060 family.</text>
</comment>
<gene>
    <name evidence="1" type="primary">ynfA</name>
    <name type="ordered locus">ECS88_1627</name>
</gene>
<sequence>MIKTTLLFFATALCEIIGCFLPWLWLKRNASIWLLLPAGISLALFVWLLTLHPAASGRVYAAYGGVYVCTALIWLRVVDGVKLTLYDWTGALIALCGMLIIVAGWGRT</sequence>
<evidence type="ECO:0000255" key="1">
    <source>
        <dbReference type="HAMAP-Rule" id="MF_00010"/>
    </source>
</evidence>
<proteinExistence type="inferred from homology"/>
<reference key="1">
    <citation type="journal article" date="2009" name="PLoS Genet.">
        <title>Organised genome dynamics in the Escherichia coli species results in highly diverse adaptive paths.</title>
        <authorList>
            <person name="Touchon M."/>
            <person name="Hoede C."/>
            <person name="Tenaillon O."/>
            <person name="Barbe V."/>
            <person name="Baeriswyl S."/>
            <person name="Bidet P."/>
            <person name="Bingen E."/>
            <person name="Bonacorsi S."/>
            <person name="Bouchier C."/>
            <person name="Bouvet O."/>
            <person name="Calteau A."/>
            <person name="Chiapello H."/>
            <person name="Clermont O."/>
            <person name="Cruveiller S."/>
            <person name="Danchin A."/>
            <person name="Diard M."/>
            <person name="Dossat C."/>
            <person name="Karoui M.E."/>
            <person name="Frapy E."/>
            <person name="Garry L."/>
            <person name="Ghigo J.M."/>
            <person name="Gilles A.M."/>
            <person name="Johnson J."/>
            <person name="Le Bouguenec C."/>
            <person name="Lescat M."/>
            <person name="Mangenot S."/>
            <person name="Martinez-Jehanne V."/>
            <person name="Matic I."/>
            <person name="Nassif X."/>
            <person name="Oztas S."/>
            <person name="Petit M.A."/>
            <person name="Pichon C."/>
            <person name="Rouy Z."/>
            <person name="Ruf C.S."/>
            <person name="Schneider D."/>
            <person name="Tourret J."/>
            <person name="Vacherie B."/>
            <person name="Vallenet D."/>
            <person name="Medigue C."/>
            <person name="Rocha E.P.C."/>
            <person name="Denamur E."/>
        </authorList>
    </citation>
    <scope>NUCLEOTIDE SEQUENCE [LARGE SCALE GENOMIC DNA]</scope>
    <source>
        <strain>S88 / ExPEC</strain>
    </source>
</reference>
<organism>
    <name type="scientific">Escherichia coli O45:K1 (strain S88 / ExPEC)</name>
    <dbReference type="NCBI Taxonomy" id="585035"/>
    <lineage>
        <taxon>Bacteria</taxon>
        <taxon>Pseudomonadati</taxon>
        <taxon>Pseudomonadota</taxon>
        <taxon>Gammaproteobacteria</taxon>
        <taxon>Enterobacterales</taxon>
        <taxon>Enterobacteriaceae</taxon>
        <taxon>Escherichia</taxon>
    </lineage>
</organism>
<protein>
    <recommendedName>
        <fullName evidence="1">UPF0060 membrane protein YnfA</fullName>
    </recommendedName>
</protein>